<feature type="chain" id="PRO_0000238467" description="Putative transmembrane protein 244">
    <location>
        <begin position="1"/>
        <end position="128"/>
    </location>
</feature>
<feature type="transmembrane region" description="Helical" evidence="1">
    <location>
        <begin position="17"/>
        <end position="37"/>
    </location>
</feature>
<feature type="transmembrane region" description="Helical" evidence="1">
    <location>
        <begin position="65"/>
        <end position="85"/>
    </location>
</feature>
<feature type="transmembrane region" description="Helical" evidence="1">
    <location>
        <begin position="93"/>
        <end position="113"/>
    </location>
</feature>
<feature type="sequence variant" id="VAR_033681" description="In dbSNP:rs7760577.">
    <original>N</original>
    <variation>I</variation>
    <location>
        <position position="60"/>
    </location>
</feature>
<feature type="sequence variant" id="VAR_026549" description="In dbSNP:rs4629709.">
    <original>F</original>
    <variation>L</variation>
    <location>
        <position position="80"/>
    </location>
</feature>
<feature type="sequence variant" id="VAR_026550" description="In dbSNP:rs9492393.">
    <original>E</original>
    <variation>G</variation>
    <location>
        <position position="86"/>
    </location>
</feature>
<feature type="sequence variant" id="VAR_026551" description="In dbSNP:rs7776426.">
    <original>F</original>
    <variation>V</variation>
    <location>
        <position position="111"/>
    </location>
</feature>
<keyword id="KW-0472">Membrane</keyword>
<keyword id="KW-1185">Reference proteome</keyword>
<keyword id="KW-0812">Transmembrane</keyword>
<keyword id="KW-1133">Transmembrane helix</keyword>
<comment type="subcellular location">
    <subcellularLocation>
        <location evidence="2">Membrane</location>
        <topology evidence="2">Multi-pass membrane protein</topology>
    </subcellularLocation>
</comment>
<name>TM244_HUMAN</name>
<accession>Q5VVB8</accession>
<gene>
    <name type="primary">TMEM244</name>
    <name type="synonym">C6orf191</name>
</gene>
<organism>
    <name type="scientific">Homo sapiens</name>
    <name type="common">Human</name>
    <dbReference type="NCBI Taxonomy" id="9606"/>
    <lineage>
        <taxon>Eukaryota</taxon>
        <taxon>Metazoa</taxon>
        <taxon>Chordata</taxon>
        <taxon>Craniata</taxon>
        <taxon>Vertebrata</taxon>
        <taxon>Euteleostomi</taxon>
        <taxon>Mammalia</taxon>
        <taxon>Eutheria</taxon>
        <taxon>Euarchontoglires</taxon>
        <taxon>Primates</taxon>
        <taxon>Haplorrhini</taxon>
        <taxon>Catarrhini</taxon>
        <taxon>Hominidae</taxon>
        <taxon>Homo</taxon>
    </lineage>
</organism>
<dbReference type="EMBL" id="AL451046">
    <property type="status" value="NOT_ANNOTATED_CDS"/>
    <property type="molecule type" value="Genomic_DNA"/>
</dbReference>
<dbReference type="CCDS" id="CCDS34536.1"/>
<dbReference type="RefSeq" id="NP_001010876.1">
    <property type="nucleotide sequence ID" value="NM_001010876.2"/>
</dbReference>
<dbReference type="STRING" id="9606.ENSP00000357125"/>
<dbReference type="BioMuta" id="TMEM244"/>
<dbReference type="DMDM" id="74747217"/>
<dbReference type="MassIVE" id="Q5VVB8"/>
<dbReference type="PaxDb" id="9606-ENSP00000357125"/>
<dbReference type="PeptideAtlas" id="Q5VVB8"/>
<dbReference type="TopDownProteomics" id="Q5VVB8"/>
<dbReference type="Antibodypedia" id="50386">
    <property type="antibodies" value="37 antibodies from 6 providers"/>
</dbReference>
<dbReference type="DNASU" id="253582"/>
<dbReference type="Ensembl" id="ENST00000368143.6">
    <property type="protein sequence ID" value="ENSP00000357125.1"/>
    <property type="gene ID" value="ENSG00000203756.8"/>
</dbReference>
<dbReference type="Ensembl" id="ENST00000438392.3">
    <property type="protein sequence ID" value="ENSP00000403755.1"/>
    <property type="gene ID" value="ENSG00000203756.8"/>
</dbReference>
<dbReference type="GeneID" id="253582"/>
<dbReference type="KEGG" id="hsa:253582"/>
<dbReference type="MANE-Select" id="ENST00000368143.6">
    <property type="protein sequence ID" value="ENSP00000357125.1"/>
    <property type="RefSeq nucleotide sequence ID" value="NM_001010876.2"/>
    <property type="RefSeq protein sequence ID" value="NP_001010876.1"/>
</dbReference>
<dbReference type="UCSC" id="uc003qbs.3">
    <property type="organism name" value="human"/>
</dbReference>
<dbReference type="AGR" id="HGNC:21571"/>
<dbReference type="CTD" id="253582"/>
<dbReference type="DisGeNET" id="253582"/>
<dbReference type="GeneCards" id="TMEM244"/>
<dbReference type="HGNC" id="HGNC:21571">
    <property type="gene designation" value="TMEM244"/>
</dbReference>
<dbReference type="HPA" id="ENSG00000203756">
    <property type="expression patterns" value="Tissue enriched (retina)"/>
</dbReference>
<dbReference type="neXtProt" id="NX_Q5VVB8"/>
<dbReference type="OpenTargets" id="ENSG00000203756"/>
<dbReference type="PharmGKB" id="PA134909151"/>
<dbReference type="VEuPathDB" id="HostDB:ENSG00000203756"/>
<dbReference type="eggNOG" id="ENOG502RA7Q">
    <property type="taxonomic scope" value="Eukaryota"/>
</dbReference>
<dbReference type="GeneTree" id="ENSGT00940000154347"/>
<dbReference type="HOGENOM" id="CLU_122907_0_0_1"/>
<dbReference type="InParanoid" id="Q5VVB8"/>
<dbReference type="OMA" id="FPSTEHW"/>
<dbReference type="OrthoDB" id="542931at2759"/>
<dbReference type="PAN-GO" id="Q5VVB8">
    <property type="GO annotations" value="0 GO annotations based on evolutionary models"/>
</dbReference>
<dbReference type="PhylomeDB" id="Q5VVB8"/>
<dbReference type="TreeFam" id="TF340485"/>
<dbReference type="PathwayCommons" id="Q5VVB8"/>
<dbReference type="SignaLink" id="Q5VVB8"/>
<dbReference type="BioGRID-ORCS" id="253582">
    <property type="hits" value="11 hits in 1105 CRISPR screens"/>
</dbReference>
<dbReference type="GenomeRNAi" id="253582"/>
<dbReference type="Pharos" id="Q5VVB8">
    <property type="development level" value="Tdark"/>
</dbReference>
<dbReference type="PRO" id="PR:Q5VVB8"/>
<dbReference type="Proteomes" id="UP000005640">
    <property type="component" value="Chromosome 6"/>
</dbReference>
<dbReference type="RNAct" id="Q5VVB8">
    <property type="molecule type" value="protein"/>
</dbReference>
<dbReference type="Bgee" id="ENSG00000203756">
    <property type="expression patterns" value="Expressed in male germ line stem cell (sensu Vertebrata) in testis and 56 other cell types or tissues"/>
</dbReference>
<dbReference type="GO" id="GO:0016020">
    <property type="term" value="C:membrane"/>
    <property type="evidence" value="ECO:0007669"/>
    <property type="project" value="UniProtKB-SubCell"/>
</dbReference>
<dbReference type="InterPro" id="IPR019185">
    <property type="entry name" value="Integral_membrane_SYS1-rel"/>
</dbReference>
<dbReference type="PANTHER" id="PTHR12952">
    <property type="entry name" value="SYS1"/>
    <property type="match status" value="1"/>
</dbReference>
<dbReference type="PANTHER" id="PTHR12952:SF1">
    <property type="entry name" value="TRANSMEMBRANE PROTEIN 244"/>
    <property type="match status" value="1"/>
</dbReference>
<protein>
    <recommendedName>
        <fullName>Putative transmembrane protein 244</fullName>
    </recommendedName>
</protein>
<proteinExistence type="predicted"/>
<reference key="1">
    <citation type="journal article" date="2003" name="Nature">
        <title>The DNA sequence and analysis of human chromosome 6.</title>
        <authorList>
            <person name="Mungall A.J."/>
            <person name="Palmer S.A."/>
            <person name="Sims S.K."/>
            <person name="Edwards C.A."/>
            <person name="Ashurst J.L."/>
            <person name="Wilming L."/>
            <person name="Jones M.C."/>
            <person name="Horton R."/>
            <person name="Hunt S.E."/>
            <person name="Scott C.E."/>
            <person name="Gilbert J.G.R."/>
            <person name="Clamp M.E."/>
            <person name="Bethel G."/>
            <person name="Milne S."/>
            <person name="Ainscough R."/>
            <person name="Almeida J.P."/>
            <person name="Ambrose K.D."/>
            <person name="Andrews T.D."/>
            <person name="Ashwell R.I.S."/>
            <person name="Babbage A.K."/>
            <person name="Bagguley C.L."/>
            <person name="Bailey J."/>
            <person name="Banerjee R."/>
            <person name="Barker D.J."/>
            <person name="Barlow K.F."/>
            <person name="Bates K."/>
            <person name="Beare D.M."/>
            <person name="Beasley H."/>
            <person name="Beasley O."/>
            <person name="Bird C.P."/>
            <person name="Blakey S.E."/>
            <person name="Bray-Allen S."/>
            <person name="Brook J."/>
            <person name="Brown A.J."/>
            <person name="Brown J.Y."/>
            <person name="Burford D.C."/>
            <person name="Burrill W."/>
            <person name="Burton J."/>
            <person name="Carder C."/>
            <person name="Carter N.P."/>
            <person name="Chapman J.C."/>
            <person name="Clark S.Y."/>
            <person name="Clark G."/>
            <person name="Clee C.M."/>
            <person name="Clegg S."/>
            <person name="Cobley V."/>
            <person name="Collier R.E."/>
            <person name="Collins J.E."/>
            <person name="Colman L.K."/>
            <person name="Corby N.R."/>
            <person name="Coville G.J."/>
            <person name="Culley K.M."/>
            <person name="Dhami P."/>
            <person name="Davies J."/>
            <person name="Dunn M."/>
            <person name="Earthrowl M.E."/>
            <person name="Ellington A.E."/>
            <person name="Evans K.A."/>
            <person name="Faulkner L."/>
            <person name="Francis M.D."/>
            <person name="Frankish A."/>
            <person name="Frankland J."/>
            <person name="French L."/>
            <person name="Garner P."/>
            <person name="Garnett J."/>
            <person name="Ghori M.J."/>
            <person name="Gilby L.M."/>
            <person name="Gillson C.J."/>
            <person name="Glithero R.J."/>
            <person name="Grafham D.V."/>
            <person name="Grant M."/>
            <person name="Gribble S."/>
            <person name="Griffiths C."/>
            <person name="Griffiths M.N.D."/>
            <person name="Hall R."/>
            <person name="Halls K.S."/>
            <person name="Hammond S."/>
            <person name="Harley J.L."/>
            <person name="Hart E.A."/>
            <person name="Heath P.D."/>
            <person name="Heathcott R."/>
            <person name="Holmes S.J."/>
            <person name="Howden P.J."/>
            <person name="Howe K.L."/>
            <person name="Howell G.R."/>
            <person name="Huckle E."/>
            <person name="Humphray S.J."/>
            <person name="Humphries M.D."/>
            <person name="Hunt A.R."/>
            <person name="Johnson C.M."/>
            <person name="Joy A.A."/>
            <person name="Kay M."/>
            <person name="Keenan S.J."/>
            <person name="Kimberley A.M."/>
            <person name="King A."/>
            <person name="Laird G.K."/>
            <person name="Langford C."/>
            <person name="Lawlor S."/>
            <person name="Leongamornlert D.A."/>
            <person name="Leversha M."/>
            <person name="Lloyd C.R."/>
            <person name="Lloyd D.M."/>
            <person name="Loveland J.E."/>
            <person name="Lovell J."/>
            <person name="Martin S."/>
            <person name="Mashreghi-Mohammadi M."/>
            <person name="Maslen G.L."/>
            <person name="Matthews L."/>
            <person name="McCann O.T."/>
            <person name="McLaren S.J."/>
            <person name="McLay K."/>
            <person name="McMurray A."/>
            <person name="Moore M.J.F."/>
            <person name="Mullikin J.C."/>
            <person name="Niblett D."/>
            <person name="Nickerson T."/>
            <person name="Novik K.L."/>
            <person name="Oliver K."/>
            <person name="Overton-Larty E.K."/>
            <person name="Parker A."/>
            <person name="Patel R."/>
            <person name="Pearce A.V."/>
            <person name="Peck A.I."/>
            <person name="Phillimore B.J.C.T."/>
            <person name="Phillips S."/>
            <person name="Plumb R.W."/>
            <person name="Porter K.M."/>
            <person name="Ramsey Y."/>
            <person name="Ranby S.A."/>
            <person name="Rice C.M."/>
            <person name="Ross M.T."/>
            <person name="Searle S.M."/>
            <person name="Sehra H.K."/>
            <person name="Sheridan E."/>
            <person name="Skuce C.D."/>
            <person name="Smith S."/>
            <person name="Smith M."/>
            <person name="Spraggon L."/>
            <person name="Squares S.L."/>
            <person name="Steward C.A."/>
            <person name="Sycamore N."/>
            <person name="Tamlyn-Hall G."/>
            <person name="Tester J."/>
            <person name="Theaker A.J."/>
            <person name="Thomas D.W."/>
            <person name="Thorpe A."/>
            <person name="Tracey A."/>
            <person name="Tromans A."/>
            <person name="Tubby B."/>
            <person name="Wall M."/>
            <person name="Wallis J.M."/>
            <person name="West A.P."/>
            <person name="White S.S."/>
            <person name="Whitehead S.L."/>
            <person name="Whittaker H."/>
            <person name="Wild A."/>
            <person name="Willey D.J."/>
            <person name="Wilmer T.E."/>
            <person name="Wood J.M."/>
            <person name="Wray P.W."/>
            <person name="Wyatt J.C."/>
            <person name="Young L."/>
            <person name="Younger R.M."/>
            <person name="Bentley D.R."/>
            <person name="Coulson A."/>
            <person name="Durbin R.M."/>
            <person name="Hubbard T."/>
            <person name="Sulston J.E."/>
            <person name="Dunham I."/>
            <person name="Rogers J."/>
            <person name="Beck S."/>
        </authorList>
    </citation>
    <scope>NUCLEOTIDE SEQUENCE [LARGE SCALE GENOMIC DNA]</scope>
</reference>
<evidence type="ECO:0000255" key="1"/>
<evidence type="ECO:0000305" key="2"/>
<sequence>MALQVRVAPSKVVLQKFLLCVILFYTVYYVSLSMGCVMFEVHELNVLAPFDFKTNPSWLNINYKVLLVSTEVTYFVCGLFFVPVVEEWVWDYAISVTILHVAITSTVMLEFPLTSHWWAALGISKLLV</sequence>